<keyword id="KW-0165">Cleavage on pair of basic residues</keyword>
<keyword id="KW-1015">Disulfide bond</keyword>
<keyword id="KW-0325">Glycoprotein</keyword>
<keyword id="KW-0339">Growth factor</keyword>
<keyword id="KW-0446">Lipid-binding</keyword>
<keyword id="KW-0481">Metalloenzyme inhibitor</keyword>
<keyword id="KW-0483">Metalloprotease inhibitor</keyword>
<keyword id="KW-0646">Protease inhibitor</keyword>
<keyword id="KW-0964">Secreted</keyword>
<keyword id="KW-0732">Signal</keyword>
<keyword id="KW-0800">Toxin</keyword>
<sequence>MSMLCYTLIIAFLIGIWAAPKSEDNVPLGSPATPDLSDTSCAQTHKALKTSRNTDQRHPAPKKAEDQELGSAANIIVDPKLFQKRRFQSPRVLFSTQPPPLSRDEQSVEFLENEDALNRNIRSKRENHPVNDHGEYSVCDSVSVWVNKTTATDIKGKPVTVMVDVNLNNHVYKQYFFETKCKNPNPVPSGCRGIDSRHWNSYCTTTQSFVKALTKEGNQASWRFIRIDTACVCVISRKTGNF</sequence>
<proteinExistence type="evidence at transcript level"/>
<comment type="function">
    <text evidence="2 3">Nerve growth factor is important for the development and maintenance of the sympathetic and sensory nervous systems. It stimulates division and differentiation of sympathetic and embryonic sensory neurons as well as basal forebrain cholinergic neurons in the brain. Its relevance in the snake venom is not clear. However, it has been shown to inhibit metalloproteinase-dependent proteolysis of platelet glycoprotein Ib alpha, suggesting a metalloproteinase inhibition to prevent metalloprotease autodigestion and/or protection against prey proteases (By similarity). Binds a lipid between the two protein chains in the homodimer. The lipid-bound form promotes histamine relase from mouse mast cells, contrary to the lipid-free form (By similarity).</text>
</comment>
<comment type="subunit">
    <text evidence="2">Homodimer; non-covalently linked.</text>
</comment>
<comment type="subcellular location">
    <subcellularLocation>
        <location evidence="2">Secreted</location>
    </subcellularLocation>
</comment>
<comment type="tissue specificity">
    <text>Expressed by the venom gland.</text>
</comment>
<comment type="similarity">
    <text evidence="6">Belongs to the NGF-beta family.</text>
</comment>
<accession>A6MFL6</accession>
<evidence type="ECO:0000250" key="1"/>
<evidence type="ECO:0000250" key="2">
    <source>
        <dbReference type="UniProtKB" id="P61898"/>
    </source>
</evidence>
<evidence type="ECO:0000250" key="3">
    <source>
        <dbReference type="UniProtKB" id="P61899"/>
    </source>
</evidence>
<evidence type="ECO:0000255" key="4"/>
<evidence type="ECO:0000256" key="5">
    <source>
        <dbReference type="SAM" id="MobiDB-lite"/>
    </source>
</evidence>
<evidence type="ECO:0000305" key="6"/>
<protein>
    <recommendedName>
        <fullName>Venom nerve growth factor 2</fullName>
        <shortName>v-NGF-2</shortName>
        <shortName>vNGF-2</shortName>
    </recommendedName>
</protein>
<dbReference type="EMBL" id="DQ917527">
    <property type="protein sequence ID" value="ABK63556.1"/>
    <property type="molecule type" value="mRNA"/>
</dbReference>
<dbReference type="SMR" id="A6MFL6"/>
<dbReference type="GO" id="GO:0030424">
    <property type="term" value="C:axon"/>
    <property type="evidence" value="ECO:0007669"/>
    <property type="project" value="TreeGrafter"/>
</dbReference>
<dbReference type="GO" id="GO:0030425">
    <property type="term" value="C:dendrite"/>
    <property type="evidence" value="ECO:0007669"/>
    <property type="project" value="TreeGrafter"/>
</dbReference>
<dbReference type="GO" id="GO:0005615">
    <property type="term" value="C:extracellular space"/>
    <property type="evidence" value="ECO:0007669"/>
    <property type="project" value="TreeGrafter"/>
</dbReference>
<dbReference type="GO" id="GO:0008021">
    <property type="term" value="C:synaptic vesicle"/>
    <property type="evidence" value="ECO:0007669"/>
    <property type="project" value="TreeGrafter"/>
</dbReference>
<dbReference type="GO" id="GO:0008083">
    <property type="term" value="F:growth factor activity"/>
    <property type="evidence" value="ECO:0007669"/>
    <property type="project" value="UniProtKB-KW"/>
</dbReference>
<dbReference type="GO" id="GO:0008289">
    <property type="term" value="F:lipid binding"/>
    <property type="evidence" value="ECO:0007669"/>
    <property type="project" value="UniProtKB-KW"/>
</dbReference>
<dbReference type="GO" id="GO:0008191">
    <property type="term" value="F:metalloendopeptidase inhibitor activity"/>
    <property type="evidence" value="ECO:0000250"/>
    <property type="project" value="UniProtKB"/>
</dbReference>
<dbReference type="GO" id="GO:0005163">
    <property type="term" value="F:nerve growth factor receptor binding"/>
    <property type="evidence" value="ECO:0007669"/>
    <property type="project" value="TreeGrafter"/>
</dbReference>
<dbReference type="GO" id="GO:0090729">
    <property type="term" value="F:toxin activity"/>
    <property type="evidence" value="ECO:0007669"/>
    <property type="project" value="UniProtKB-KW"/>
</dbReference>
<dbReference type="GO" id="GO:0007169">
    <property type="term" value="P:cell surface receptor protein tyrosine kinase signaling pathway"/>
    <property type="evidence" value="ECO:0007669"/>
    <property type="project" value="TreeGrafter"/>
</dbReference>
<dbReference type="GO" id="GO:0050804">
    <property type="term" value="P:modulation of chemical synaptic transmission"/>
    <property type="evidence" value="ECO:0007669"/>
    <property type="project" value="TreeGrafter"/>
</dbReference>
<dbReference type="GO" id="GO:0043524">
    <property type="term" value="P:negative regulation of neuron apoptotic process"/>
    <property type="evidence" value="ECO:0007669"/>
    <property type="project" value="TreeGrafter"/>
</dbReference>
<dbReference type="GO" id="GO:0021675">
    <property type="term" value="P:nerve development"/>
    <property type="evidence" value="ECO:0007669"/>
    <property type="project" value="TreeGrafter"/>
</dbReference>
<dbReference type="GO" id="GO:0038180">
    <property type="term" value="P:nerve growth factor signaling pathway"/>
    <property type="evidence" value="ECO:0007669"/>
    <property type="project" value="TreeGrafter"/>
</dbReference>
<dbReference type="GO" id="GO:0048812">
    <property type="term" value="P:neuron projection morphogenesis"/>
    <property type="evidence" value="ECO:0007669"/>
    <property type="project" value="TreeGrafter"/>
</dbReference>
<dbReference type="FunFam" id="2.10.90.10:FF:000002">
    <property type="entry name" value="Brain-derived neurotrophic factor"/>
    <property type="match status" value="1"/>
</dbReference>
<dbReference type="Gene3D" id="2.10.90.10">
    <property type="entry name" value="Cystine-knot cytokines"/>
    <property type="match status" value="1"/>
</dbReference>
<dbReference type="InterPro" id="IPR029034">
    <property type="entry name" value="Cystine-knot_cytokine"/>
</dbReference>
<dbReference type="InterPro" id="IPR020408">
    <property type="entry name" value="Nerve_growth_factor-like"/>
</dbReference>
<dbReference type="InterPro" id="IPR002072">
    <property type="entry name" value="Nerve_growth_factor-rel"/>
</dbReference>
<dbReference type="InterPro" id="IPR020425">
    <property type="entry name" value="Nerve_growth_factor_bsu"/>
</dbReference>
<dbReference type="InterPro" id="IPR019846">
    <property type="entry name" value="Nerve_growth_factor_CS"/>
</dbReference>
<dbReference type="InterPro" id="IPR020433">
    <property type="entry name" value="Venom_nerve_growth_factor"/>
</dbReference>
<dbReference type="PANTHER" id="PTHR11589:SF10">
    <property type="entry name" value="BETA-NERVE GROWTH FACTOR"/>
    <property type="match status" value="1"/>
</dbReference>
<dbReference type="PANTHER" id="PTHR11589">
    <property type="entry name" value="NERVE GROWTH FACTOR NGF -RELATED"/>
    <property type="match status" value="1"/>
</dbReference>
<dbReference type="Pfam" id="PF00243">
    <property type="entry name" value="NGF"/>
    <property type="match status" value="1"/>
</dbReference>
<dbReference type="PIRSF" id="PIRSF001789">
    <property type="entry name" value="NGF"/>
    <property type="match status" value="1"/>
</dbReference>
<dbReference type="PRINTS" id="PR00268">
    <property type="entry name" value="NGF"/>
</dbReference>
<dbReference type="PRINTS" id="PR01913">
    <property type="entry name" value="NGFBETA"/>
</dbReference>
<dbReference type="PRINTS" id="PR01917">
    <property type="entry name" value="VENOMNGF"/>
</dbReference>
<dbReference type="SMART" id="SM00140">
    <property type="entry name" value="NGF"/>
    <property type="match status" value="1"/>
</dbReference>
<dbReference type="SUPFAM" id="SSF57501">
    <property type="entry name" value="Cystine-knot cytokines"/>
    <property type="match status" value="1"/>
</dbReference>
<dbReference type="PROSITE" id="PS00248">
    <property type="entry name" value="NGF_1"/>
    <property type="match status" value="1"/>
</dbReference>
<dbReference type="PROSITE" id="PS50270">
    <property type="entry name" value="NGF_2"/>
    <property type="match status" value="1"/>
</dbReference>
<feature type="signal peptide" evidence="4">
    <location>
        <begin position="1"/>
        <end position="18"/>
    </location>
</feature>
<feature type="propeptide" id="PRO_5000254121" evidence="1">
    <location>
        <begin position="19"/>
        <end position="125"/>
    </location>
</feature>
<feature type="chain" id="PRO_5000254122" description="Venom nerve growth factor 2">
    <location>
        <begin position="126"/>
        <end position="242"/>
    </location>
</feature>
<feature type="region of interest" description="Disordered" evidence="5">
    <location>
        <begin position="46"/>
        <end position="69"/>
    </location>
</feature>
<feature type="compositionally biased region" description="Basic and acidic residues" evidence="5">
    <location>
        <begin position="52"/>
        <end position="66"/>
    </location>
</feature>
<feature type="glycosylation site" description="N-linked (GlcNAc...) asparagine" evidence="4">
    <location>
        <position position="147"/>
    </location>
</feature>
<feature type="disulfide bond" evidence="2">
    <location>
        <begin position="139"/>
        <end position="203"/>
    </location>
</feature>
<feature type="disulfide bond" evidence="2">
    <location>
        <begin position="181"/>
        <end position="231"/>
    </location>
</feature>
<feature type="disulfide bond" evidence="2">
    <location>
        <begin position="191"/>
        <end position="233"/>
    </location>
</feature>
<organism>
    <name type="scientific">Demansia vestigiata</name>
    <name type="common">Lesser black whip snake</name>
    <name type="synonym">Demansia atra</name>
    <dbReference type="NCBI Taxonomy" id="412038"/>
    <lineage>
        <taxon>Eukaryota</taxon>
        <taxon>Metazoa</taxon>
        <taxon>Chordata</taxon>
        <taxon>Craniata</taxon>
        <taxon>Vertebrata</taxon>
        <taxon>Euteleostomi</taxon>
        <taxon>Lepidosauria</taxon>
        <taxon>Squamata</taxon>
        <taxon>Bifurcata</taxon>
        <taxon>Unidentata</taxon>
        <taxon>Episquamata</taxon>
        <taxon>Toxicofera</taxon>
        <taxon>Serpentes</taxon>
        <taxon>Colubroidea</taxon>
        <taxon>Elapidae</taxon>
        <taxon>Notechinae</taxon>
        <taxon>Demansia</taxon>
    </lineage>
</organism>
<reference key="1">
    <citation type="journal article" date="2006" name="Proteomics">
        <title>Post-translational modification accounts for the presence of varied forms of nerve growth factor in Australian elapid snake venoms.</title>
        <authorList>
            <person name="Earl S.T.H."/>
            <person name="Birrell G.W."/>
            <person name="Wallis T.P."/>
            <person name="St Pierre L."/>
            <person name="Masci P.P."/>
            <person name="de Jersey J."/>
            <person name="Gorman J.J."/>
            <person name="Lavin M.F."/>
        </authorList>
    </citation>
    <scope>NUCLEOTIDE SEQUENCE [MRNA]</scope>
    <source>
        <tissue>Venom gland</tissue>
    </source>
</reference>
<reference key="2">
    <citation type="journal article" date="2007" name="J. Proteome Res.">
        <title>Diversity of toxic components from the venom of the evolutionarily distinct black whip snake, Demansia vestigiata.</title>
        <authorList>
            <person name="St Pierre L."/>
            <person name="Birrell G.W."/>
            <person name="Earl S.T.H."/>
            <person name="Wallis T.P."/>
            <person name="Gorman J.J."/>
            <person name="de Jersey J."/>
            <person name="Masci P.P."/>
            <person name="Lavin M.F."/>
        </authorList>
    </citation>
    <scope>NUCLEOTIDE SEQUENCE [MRNA]</scope>
    <source>
        <tissue>Venom gland</tissue>
    </source>
</reference>
<name>NGFV2_DEMVE</name>